<organism>
    <name type="scientific">Shewanella baltica (strain OS185)</name>
    <dbReference type="NCBI Taxonomy" id="402882"/>
    <lineage>
        <taxon>Bacteria</taxon>
        <taxon>Pseudomonadati</taxon>
        <taxon>Pseudomonadota</taxon>
        <taxon>Gammaproteobacteria</taxon>
        <taxon>Alteromonadales</taxon>
        <taxon>Shewanellaceae</taxon>
        <taxon>Shewanella</taxon>
    </lineage>
</organism>
<sequence>MANSKSAKKRALQSEKRRQHNASRRSMLRTYVKKVIAAIKAGDHKTAAEAFAVAQPIVDRMATKGLIHKNKAARQKARLNAKIKAIAA</sequence>
<reference key="1">
    <citation type="submission" date="2007-07" db="EMBL/GenBank/DDBJ databases">
        <title>Complete sequence of chromosome of Shewanella baltica OS185.</title>
        <authorList>
            <consortium name="US DOE Joint Genome Institute"/>
            <person name="Copeland A."/>
            <person name="Lucas S."/>
            <person name="Lapidus A."/>
            <person name="Barry K."/>
            <person name="Glavina del Rio T."/>
            <person name="Dalin E."/>
            <person name="Tice H."/>
            <person name="Pitluck S."/>
            <person name="Sims D."/>
            <person name="Brettin T."/>
            <person name="Bruce D."/>
            <person name="Detter J.C."/>
            <person name="Han C."/>
            <person name="Schmutz J."/>
            <person name="Larimer F."/>
            <person name="Land M."/>
            <person name="Hauser L."/>
            <person name="Kyrpides N."/>
            <person name="Mikhailova N."/>
            <person name="Brettar I."/>
            <person name="Rodrigues J."/>
            <person name="Konstantinidis K."/>
            <person name="Tiedje J."/>
            <person name="Richardson P."/>
        </authorList>
    </citation>
    <scope>NUCLEOTIDE SEQUENCE [LARGE SCALE GENOMIC DNA]</scope>
    <source>
        <strain>OS185</strain>
    </source>
</reference>
<proteinExistence type="inferred from homology"/>
<gene>
    <name evidence="1" type="primary">rpsT</name>
    <name type="ordered locus">Shew185_1118</name>
</gene>
<comment type="function">
    <text evidence="1">Binds directly to 16S ribosomal RNA.</text>
</comment>
<comment type="similarity">
    <text evidence="1">Belongs to the bacterial ribosomal protein bS20 family.</text>
</comment>
<accession>A6WKD1</accession>
<dbReference type="EMBL" id="CP000753">
    <property type="protein sequence ID" value="ABS07270.1"/>
    <property type="molecule type" value="Genomic_DNA"/>
</dbReference>
<dbReference type="RefSeq" id="WP_006080633.1">
    <property type="nucleotide sequence ID" value="NC_009665.1"/>
</dbReference>
<dbReference type="SMR" id="A6WKD1"/>
<dbReference type="GeneID" id="11771433"/>
<dbReference type="KEGG" id="sbm:Shew185_1118"/>
<dbReference type="HOGENOM" id="CLU_160655_4_0_6"/>
<dbReference type="GO" id="GO:0005829">
    <property type="term" value="C:cytosol"/>
    <property type="evidence" value="ECO:0007669"/>
    <property type="project" value="TreeGrafter"/>
</dbReference>
<dbReference type="GO" id="GO:0015935">
    <property type="term" value="C:small ribosomal subunit"/>
    <property type="evidence" value="ECO:0007669"/>
    <property type="project" value="TreeGrafter"/>
</dbReference>
<dbReference type="GO" id="GO:0070181">
    <property type="term" value="F:small ribosomal subunit rRNA binding"/>
    <property type="evidence" value="ECO:0007669"/>
    <property type="project" value="TreeGrafter"/>
</dbReference>
<dbReference type="GO" id="GO:0003735">
    <property type="term" value="F:structural constituent of ribosome"/>
    <property type="evidence" value="ECO:0007669"/>
    <property type="project" value="InterPro"/>
</dbReference>
<dbReference type="GO" id="GO:0006412">
    <property type="term" value="P:translation"/>
    <property type="evidence" value="ECO:0007669"/>
    <property type="project" value="UniProtKB-UniRule"/>
</dbReference>
<dbReference type="FunFam" id="1.20.58.110:FF:000001">
    <property type="entry name" value="30S ribosomal protein S20"/>
    <property type="match status" value="1"/>
</dbReference>
<dbReference type="Gene3D" id="1.20.58.110">
    <property type="entry name" value="Ribosomal protein S20"/>
    <property type="match status" value="1"/>
</dbReference>
<dbReference type="HAMAP" id="MF_00500">
    <property type="entry name" value="Ribosomal_bS20"/>
    <property type="match status" value="1"/>
</dbReference>
<dbReference type="InterPro" id="IPR002583">
    <property type="entry name" value="Ribosomal_bS20"/>
</dbReference>
<dbReference type="InterPro" id="IPR036510">
    <property type="entry name" value="Ribosomal_bS20_sf"/>
</dbReference>
<dbReference type="NCBIfam" id="TIGR00029">
    <property type="entry name" value="S20"/>
    <property type="match status" value="1"/>
</dbReference>
<dbReference type="PANTHER" id="PTHR33398">
    <property type="entry name" value="30S RIBOSOMAL PROTEIN S20"/>
    <property type="match status" value="1"/>
</dbReference>
<dbReference type="PANTHER" id="PTHR33398:SF1">
    <property type="entry name" value="SMALL RIBOSOMAL SUBUNIT PROTEIN BS20C"/>
    <property type="match status" value="1"/>
</dbReference>
<dbReference type="Pfam" id="PF01649">
    <property type="entry name" value="Ribosomal_S20p"/>
    <property type="match status" value="1"/>
</dbReference>
<dbReference type="SUPFAM" id="SSF46992">
    <property type="entry name" value="Ribosomal protein S20"/>
    <property type="match status" value="1"/>
</dbReference>
<protein>
    <recommendedName>
        <fullName evidence="1">Small ribosomal subunit protein bS20</fullName>
    </recommendedName>
    <alternativeName>
        <fullName evidence="3">30S ribosomal protein S20</fullName>
    </alternativeName>
</protein>
<evidence type="ECO:0000255" key="1">
    <source>
        <dbReference type="HAMAP-Rule" id="MF_00500"/>
    </source>
</evidence>
<evidence type="ECO:0000256" key="2">
    <source>
        <dbReference type="SAM" id="MobiDB-lite"/>
    </source>
</evidence>
<evidence type="ECO:0000305" key="3"/>
<keyword id="KW-0687">Ribonucleoprotein</keyword>
<keyword id="KW-0689">Ribosomal protein</keyword>
<keyword id="KW-0694">RNA-binding</keyword>
<keyword id="KW-0699">rRNA-binding</keyword>
<name>RS20_SHEB8</name>
<feature type="chain" id="PRO_1000014649" description="Small ribosomal subunit protein bS20">
    <location>
        <begin position="1"/>
        <end position="88"/>
    </location>
</feature>
<feature type="region of interest" description="Disordered" evidence="2">
    <location>
        <begin position="1"/>
        <end position="27"/>
    </location>
</feature>